<comment type="function">
    <text evidence="1">Catalyzes the condensation of (S)-aspartate-beta-semialdehyde [(S)-ASA] and pyruvate to 4-hydroxy-tetrahydrodipicolinate (HTPA).</text>
</comment>
<comment type="catalytic activity">
    <reaction evidence="1">
        <text>L-aspartate 4-semialdehyde + pyruvate = (2S,4S)-4-hydroxy-2,3,4,5-tetrahydrodipicolinate + H2O + H(+)</text>
        <dbReference type="Rhea" id="RHEA:34171"/>
        <dbReference type="ChEBI" id="CHEBI:15361"/>
        <dbReference type="ChEBI" id="CHEBI:15377"/>
        <dbReference type="ChEBI" id="CHEBI:15378"/>
        <dbReference type="ChEBI" id="CHEBI:67139"/>
        <dbReference type="ChEBI" id="CHEBI:537519"/>
        <dbReference type="EC" id="4.3.3.7"/>
    </reaction>
</comment>
<comment type="pathway">
    <text evidence="1">Amino-acid biosynthesis; L-lysine biosynthesis via DAP pathway; (S)-tetrahydrodipicolinate from L-aspartate: step 3/4.</text>
</comment>
<comment type="subunit">
    <text evidence="1">Homotetramer; dimer of dimers.</text>
</comment>
<comment type="subcellular location">
    <subcellularLocation>
        <location evidence="1">Cytoplasm</location>
    </subcellularLocation>
</comment>
<comment type="similarity">
    <text evidence="1">Belongs to the DapA family.</text>
</comment>
<comment type="caution">
    <text evidence="2">Was originally thought to be a dihydrodipicolinate synthase (DHDPS), catalyzing the condensation of (S)-aspartate-beta-semialdehyde [(S)-ASA] and pyruvate to dihydrodipicolinate (DHDP). However, it was shown in E.coli that the product of the enzymatic reaction is not dihydrodipicolinate but in fact (4S)-4-hydroxy-2,3,4,5-tetrahydro-(2S)-dipicolinic acid (HTPA), and that the consecutive dehydration reaction leading to DHDP is not spontaneous but catalyzed by DapB.</text>
</comment>
<accession>Q11VI2</accession>
<evidence type="ECO:0000255" key="1">
    <source>
        <dbReference type="HAMAP-Rule" id="MF_00418"/>
    </source>
</evidence>
<evidence type="ECO:0000305" key="2"/>
<name>DAPA_CYTH3</name>
<reference key="1">
    <citation type="journal article" date="2007" name="Appl. Environ. Microbiol.">
        <title>Genome sequence of the cellulolytic gliding bacterium Cytophaga hutchinsonii.</title>
        <authorList>
            <person name="Xie G."/>
            <person name="Bruce D.C."/>
            <person name="Challacombe J.F."/>
            <person name="Chertkov O."/>
            <person name="Detter J.C."/>
            <person name="Gilna P."/>
            <person name="Han C.S."/>
            <person name="Lucas S."/>
            <person name="Misra M."/>
            <person name="Myers G.L."/>
            <person name="Richardson P."/>
            <person name="Tapia R."/>
            <person name="Thayer N."/>
            <person name="Thompson L.S."/>
            <person name="Brettin T.S."/>
            <person name="Henrissat B."/>
            <person name="Wilson D.B."/>
            <person name="McBride M.J."/>
        </authorList>
    </citation>
    <scope>NUCLEOTIDE SEQUENCE [LARGE SCALE GENOMIC DNA]</scope>
    <source>
        <strain>ATCC 33406 / DSM 1761 / JCM 20678 / CIP 103989 / IAM 12607 / NBRC 15051 / NCIMB 9469 / D465</strain>
    </source>
</reference>
<feature type="chain" id="PRO_0000340943" description="4-hydroxy-tetrahydrodipicolinate synthase">
    <location>
        <begin position="1"/>
        <end position="297"/>
    </location>
</feature>
<feature type="active site" description="Proton donor/acceptor" evidence="1">
    <location>
        <position position="135"/>
    </location>
</feature>
<feature type="active site" description="Schiff-base intermediate with substrate" evidence="1">
    <location>
        <position position="163"/>
    </location>
</feature>
<feature type="binding site" evidence="1">
    <location>
        <position position="47"/>
    </location>
    <ligand>
        <name>pyruvate</name>
        <dbReference type="ChEBI" id="CHEBI:15361"/>
    </ligand>
</feature>
<feature type="binding site" evidence="1">
    <location>
        <position position="205"/>
    </location>
    <ligand>
        <name>pyruvate</name>
        <dbReference type="ChEBI" id="CHEBI:15361"/>
    </ligand>
</feature>
<feature type="site" description="Part of a proton relay during catalysis" evidence="1">
    <location>
        <position position="46"/>
    </location>
</feature>
<feature type="site" description="Part of a proton relay during catalysis" evidence="1">
    <location>
        <position position="109"/>
    </location>
</feature>
<protein>
    <recommendedName>
        <fullName evidence="1">4-hydroxy-tetrahydrodipicolinate synthase</fullName>
        <shortName evidence="1">HTPA synthase</shortName>
        <ecNumber evidence="1">4.3.3.7</ecNumber>
    </recommendedName>
</protein>
<sequence>MHTFYGTGTALITPFKKDHSVDYDAFKNLIEFNISSGVDYIVVNGTTAESATTSKEEKAKLLEVALDVNNGRVPVMYGIGGNDTAEVIQRIGSADFKGVDALLSVCPYYNKPSQEGVFQHYKAIAEKCPVPVLAYNVPGRTGINISAKTSIRLSEVKNIFGIKEASGDLVQALEIIKNTPNEFLVISGDDLLAVPTISLGAVGAISVLSNTYPAKFSEMIKAAIQSRFQQATQILARFTEMNPLMYEEGNPVGVKSLLELMGICSSEVRLPLVKASGELIHKIEQAHVKITREYANH</sequence>
<keyword id="KW-0028">Amino-acid biosynthesis</keyword>
<keyword id="KW-0963">Cytoplasm</keyword>
<keyword id="KW-0220">Diaminopimelate biosynthesis</keyword>
<keyword id="KW-0456">Lyase</keyword>
<keyword id="KW-0457">Lysine biosynthesis</keyword>
<keyword id="KW-1185">Reference proteome</keyword>
<keyword id="KW-0704">Schiff base</keyword>
<proteinExistence type="inferred from homology"/>
<organism>
    <name type="scientific">Cytophaga hutchinsonii (strain ATCC 33406 / DSM 1761 / CIP 103989 / NBRC 15051 / NCIMB 9469 / D465)</name>
    <dbReference type="NCBI Taxonomy" id="269798"/>
    <lineage>
        <taxon>Bacteria</taxon>
        <taxon>Pseudomonadati</taxon>
        <taxon>Bacteroidota</taxon>
        <taxon>Cytophagia</taxon>
        <taxon>Cytophagales</taxon>
        <taxon>Cytophagaceae</taxon>
        <taxon>Cytophaga</taxon>
    </lineage>
</organism>
<dbReference type="EC" id="4.3.3.7" evidence="1"/>
<dbReference type="EMBL" id="CP000383">
    <property type="protein sequence ID" value="ABG58584.1"/>
    <property type="molecule type" value="Genomic_DNA"/>
</dbReference>
<dbReference type="RefSeq" id="WP_011584699.1">
    <property type="nucleotide sequence ID" value="NC_008255.1"/>
</dbReference>
<dbReference type="SMR" id="Q11VI2"/>
<dbReference type="STRING" id="269798.CHU_1312"/>
<dbReference type="KEGG" id="chu:CHU_1312"/>
<dbReference type="eggNOG" id="COG0329">
    <property type="taxonomic scope" value="Bacteria"/>
</dbReference>
<dbReference type="HOGENOM" id="CLU_049343_7_1_10"/>
<dbReference type="OrthoDB" id="9782828at2"/>
<dbReference type="UniPathway" id="UPA00034">
    <property type="reaction ID" value="UER00017"/>
</dbReference>
<dbReference type="Proteomes" id="UP000001822">
    <property type="component" value="Chromosome"/>
</dbReference>
<dbReference type="GO" id="GO:0005829">
    <property type="term" value="C:cytosol"/>
    <property type="evidence" value="ECO:0007669"/>
    <property type="project" value="TreeGrafter"/>
</dbReference>
<dbReference type="GO" id="GO:0008840">
    <property type="term" value="F:4-hydroxy-tetrahydrodipicolinate synthase activity"/>
    <property type="evidence" value="ECO:0007669"/>
    <property type="project" value="UniProtKB-UniRule"/>
</dbReference>
<dbReference type="GO" id="GO:0019877">
    <property type="term" value="P:diaminopimelate biosynthetic process"/>
    <property type="evidence" value="ECO:0007669"/>
    <property type="project" value="UniProtKB-UniRule"/>
</dbReference>
<dbReference type="GO" id="GO:0009089">
    <property type="term" value="P:lysine biosynthetic process via diaminopimelate"/>
    <property type="evidence" value="ECO:0007669"/>
    <property type="project" value="UniProtKB-UniRule"/>
</dbReference>
<dbReference type="CDD" id="cd00950">
    <property type="entry name" value="DHDPS"/>
    <property type="match status" value="1"/>
</dbReference>
<dbReference type="Gene3D" id="3.20.20.70">
    <property type="entry name" value="Aldolase class I"/>
    <property type="match status" value="1"/>
</dbReference>
<dbReference type="HAMAP" id="MF_00418">
    <property type="entry name" value="DapA"/>
    <property type="match status" value="1"/>
</dbReference>
<dbReference type="InterPro" id="IPR013785">
    <property type="entry name" value="Aldolase_TIM"/>
</dbReference>
<dbReference type="InterPro" id="IPR005263">
    <property type="entry name" value="DapA"/>
</dbReference>
<dbReference type="InterPro" id="IPR002220">
    <property type="entry name" value="DapA-like"/>
</dbReference>
<dbReference type="InterPro" id="IPR020625">
    <property type="entry name" value="Schiff_base-form_aldolases_AS"/>
</dbReference>
<dbReference type="NCBIfam" id="TIGR00674">
    <property type="entry name" value="dapA"/>
    <property type="match status" value="1"/>
</dbReference>
<dbReference type="PANTHER" id="PTHR12128:SF66">
    <property type="entry name" value="4-HYDROXY-2-OXOGLUTARATE ALDOLASE, MITOCHONDRIAL"/>
    <property type="match status" value="1"/>
</dbReference>
<dbReference type="PANTHER" id="PTHR12128">
    <property type="entry name" value="DIHYDRODIPICOLINATE SYNTHASE"/>
    <property type="match status" value="1"/>
</dbReference>
<dbReference type="Pfam" id="PF00701">
    <property type="entry name" value="DHDPS"/>
    <property type="match status" value="1"/>
</dbReference>
<dbReference type="PIRSF" id="PIRSF001365">
    <property type="entry name" value="DHDPS"/>
    <property type="match status" value="1"/>
</dbReference>
<dbReference type="PRINTS" id="PR00146">
    <property type="entry name" value="DHPICSNTHASE"/>
</dbReference>
<dbReference type="SMART" id="SM01130">
    <property type="entry name" value="DHDPS"/>
    <property type="match status" value="1"/>
</dbReference>
<dbReference type="SUPFAM" id="SSF51569">
    <property type="entry name" value="Aldolase"/>
    <property type="match status" value="1"/>
</dbReference>
<dbReference type="PROSITE" id="PS00666">
    <property type="entry name" value="DHDPS_2"/>
    <property type="match status" value="1"/>
</dbReference>
<gene>
    <name evidence="1" type="primary">dapA</name>
    <name type="ordered locus">CHU_1312</name>
</gene>